<proteinExistence type="inferred from homology"/>
<gene>
    <name evidence="1" type="primary">secB</name>
    <name type="ordered locus">BQ00950</name>
</gene>
<evidence type="ECO:0000255" key="1">
    <source>
        <dbReference type="HAMAP-Rule" id="MF_00821"/>
    </source>
</evidence>
<feature type="chain" id="PRO_0000055346" description="Protein-export protein SecB">
    <location>
        <begin position="1"/>
        <end position="158"/>
    </location>
</feature>
<keyword id="KW-0143">Chaperone</keyword>
<keyword id="KW-0963">Cytoplasm</keyword>
<keyword id="KW-0653">Protein transport</keyword>
<keyword id="KW-0811">Translocation</keyword>
<keyword id="KW-0813">Transport</keyword>
<accession>Q6G0W9</accession>
<sequence length="158" mass="17807">MVKSEINNNGGEPVFAVLTQYLKDFSFENPSAPRSLRPREKAPQIDININVNANPIGDDNYDVVLSLSVKANDNNETLFHVELIYGGVFHIKDIPQEHIMPLVFIECPRLLFPFARQIISDATQNGGFPPLWIDPIDFAALFQKRVAEEQKNSQTQPS</sequence>
<reference key="1">
    <citation type="journal article" date="2004" name="Proc. Natl. Acad. Sci. U.S.A.">
        <title>The louse-borne human pathogen Bartonella quintana is a genomic derivative of the zoonotic agent Bartonella henselae.</title>
        <authorList>
            <person name="Alsmark U.C.M."/>
            <person name="Frank A.C."/>
            <person name="Karlberg E.O."/>
            <person name="Legault B.-A."/>
            <person name="Ardell D.H."/>
            <person name="Canbaeck B."/>
            <person name="Eriksson A.-S."/>
            <person name="Naeslund A.K."/>
            <person name="Handley S.A."/>
            <person name="Huvet M."/>
            <person name="La Scola B."/>
            <person name="Holmberg M."/>
            <person name="Andersson S.G.E."/>
        </authorList>
    </citation>
    <scope>NUCLEOTIDE SEQUENCE [LARGE SCALE GENOMIC DNA]</scope>
    <source>
        <strain>Toulouse</strain>
    </source>
</reference>
<name>SECB_BARQU</name>
<protein>
    <recommendedName>
        <fullName evidence="1">Protein-export protein SecB</fullName>
    </recommendedName>
</protein>
<organism>
    <name type="scientific">Bartonella quintana (strain Toulouse)</name>
    <name type="common">Rochalimaea quintana</name>
    <dbReference type="NCBI Taxonomy" id="283165"/>
    <lineage>
        <taxon>Bacteria</taxon>
        <taxon>Pseudomonadati</taxon>
        <taxon>Pseudomonadota</taxon>
        <taxon>Alphaproteobacteria</taxon>
        <taxon>Hyphomicrobiales</taxon>
        <taxon>Bartonellaceae</taxon>
        <taxon>Bartonella</taxon>
    </lineage>
</organism>
<comment type="function">
    <text evidence="1">One of the proteins required for the normal export of preproteins out of the cell cytoplasm. It is a molecular chaperone that binds to a subset of precursor proteins, maintaining them in a translocation-competent state. It also specifically binds to its receptor SecA.</text>
</comment>
<comment type="subunit">
    <text evidence="1">Homotetramer, a dimer of dimers. One homotetramer interacts with 1 SecA dimer.</text>
</comment>
<comment type="subcellular location">
    <subcellularLocation>
        <location evidence="1">Cytoplasm</location>
    </subcellularLocation>
</comment>
<comment type="similarity">
    <text evidence="1">Belongs to the SecB family.</text>
</comment>
<dbReference type="EMBL" id="BX897700">
    <property type="protein sequence ID" value="CAF25601.1"/>
    <property type="molecule type" value="Genomic_DNA"/>
</dbReference>
<dbReference type="RefSeq" id="WP_011178926.1">
    <property type="nucleotide sequence ID" value="NC_005955.1"/>
</dbReference>
<dbReference type="SMR" id="Q6G0W9"/>
<dbReference type="KEGG" id="bqu:BQ00950"/>
<dbReference type="eggNOG" id="COG1952">
    <property type="taxonomic scope" value="Bacteria"/>
</dbReference>
<dbReference type="HOGENOM" id="CLU_111574_0_0_5"/>
<dbReference type="OrthoDB" id="9795145at2"/>
<dbReference type="Proteomes" id="UP000000597">
    <property type="component" value="Chromosome"/>
</dbReference>
<dbReference type="GO" id="GO:0005737">
    <property type="term" value="C:cytoplasm"/>
    <property type="evidence" value="ECO:0007669"/>
    <property type="project" value="UniProtKB-SubCell"/>
</dbReference>
<dbReference type="GO" id="GO:0051082">
    <property type="term" value="F:unfolded protein binding"/>
    <property type="evidence" value="ECO:0007669"/>
    <property type="project" value="InterPro"/>
</dbReference>
<dbReference type="GO" id="GO:0006457">
    <property type="term" value="P:protein folding"/>
    <property type="evidence" value="ECO:0007669"/>
    <property type="project" value="UniProtKB-UniRule"/>
</dbReference>
<dbReference type="GO" id="GO:0051262">
    <property type="term" value="P:protein tetramerization"/>
    <property type="evidence" value="ECO:0007669"/>
    <property type="project" value="InterPro"/>
</dbReference>
<dbReference type="GO" id="GO:0015031">
    <property type="term" value="P:protein transport"/>
    <property type="evidence" value="ECO:0007669"/>
    <property type="project" value="UniProtKB-UniRule"/>
</dbReference>
<dbReference type="Gene3D" id="3.10.420.10">
    <property type="entry name" value="SecB-like"/>
    <property type="match status" value="1"/>
</dbReference>
<dbReference type="HAMAP" id="MF_00821">
    <property type="entry name" value="SecB"/>
    <property type="match status" value="1"/>
</dbReference>
<dbReference type="InterPro" id="IPR003708">
    <property type="entry name" value="SecB"/>
</dbReference>
<dbReference type="InterPro" id="IPR035958">
    <property type="entry name" value="SecB-like_sf"/>
</dbReference>
<dbReference type="NCBIfam" id="NF004392">
    <property type="entry name" value="PRK05751.1-3"/>
    <property type="match status" value="1"/>
</dbReference>
<dbReference type="NCBIfam" id="TIGR00809">
    <property type="entry name" value="secB"/>
    <property type="match status" value="1"/>
</dbReference>
<dbReference type="PANTHER" id="PTHR36918">
    <property type="match status" value="1"/>
</dbReference>
<dbReference type="PANTHER" id="PTHR36918:SF1">
    <property type="entry name" value="PROTEIN-EXPORT PROTEIN SECB"/>
    <property type="match status" value="1"/>
</dbReference>
<dbReference type="Pfam" id="PF02556">
    <property type="entry name" value="SecB"/>
    <property type="match status" value="1"/>
</dbReference>
<dbReference type="PRINTS" id="PR01594">
    <property type="entry name" value="SECBCHAPRONE"/>
</dbReference>
<dbReference type="SUPFAM" id="SSF54611">
    <property type="entry name" value="SecB-like"/>
    <property type="match status" value="1"/>
</dbReference>